<sequence length="565" mass="62689">MTTREFDYIICGAGSAGNVLATRLTEDPGVTVLLLEAGGPDYRFDFRTQMPAALAYPLQGRRYNWAYETDPEPHMNHRRMECGRGKGLGGSSLINGMCYIRGNALDYDNWATHKGLEDWAYLDCLPYFRKAETRDVGPNDYHGGDGPVSVTTSKPGVNPLFEAMVEAGVQAGYPRTDDLNGYQQEGFGPMDRTVTPRGRRASTARGYLDQARARPNLEIVTHALADRILFSGKRATGVTFLHGSARVTAHARREVLVCSGAIASPQLLQRSGVGPGEWLRELDIPVVLDLPGVGRNLQDHLEMYIQFECKEPVSLYPALKWWNQPKIGLEWMLNGTGLGASNHFEAGGFIRTRDDDPWPNIQYHFLPVAINYNGSNAIEMHGFQAHVGSMRSPSRGRVKLKSRDPHAHPSILFNYMAEALDWREFRDAIRATREIMRQPALDRFRGRELNPGADLKSDNELDTFVRARAETAFHPSCSCKMGYDDMAVVDNEGRVHGIDGLRVVDASIMPIITTGNLNAPTIMIAEKIADRIRKHKPLERSNAQYYVANGAPARGGKPARAPAVV</sequence>
<keyword id="KW-0274">FAD</keyword>
<keyword id="KW-0285">Flavoprotein</keyword>
<keyword id="KW-0520">NAD</keyword>
<keyword id="KW-0560">Oxidoreductase</keyword>
<dbReference type="EC" id="1.1.99.1" evidence="1"/>
<dbReference type="EC" id="1.2.1.8" evidence="1"/>
<dbReference type="EMBL" id="CP000125">
    <property type="protein sequence ID" value="ABA51751.1"/>
    <property type="molecule type" value="Genomic_DNA"/>
</dbReference>
<dbReference type="RefSeq" id="WP_004528663.1">
    <property type="nucleotide sequence ID" value="NC_007435.1"/>
</dbReference>
<dbReference type="SMR" id="Q3JLL7"/>
<dbReference type="EnsemblBacteria" id="ABA51751">
    <property type="protein sequence ID" value="ABA51751"/>
    <property type="gene ID" value="BURPS1710b_A0377"/>
</dbReference>
<dbReference type="KEGG" id="bpm:BURPS1710b_A0377"/>
<dbReference type="HOGENOM" id="CLU_002865_7_1_4"/>
<dbReference type="UniPathway" id="UPA00529">
    <property type="reaction ID" value="UER00385"/>
</dbReference>
<dbReference type="Proteomes" id="UP000002700">
    <property type="component" value="Chromosome II"/>
</dbReference>
<dbReference type="GO" id="GO:0016020">
    <property type="term" value="C:membrane"/>
    <property type="evidence" value="ECO:0007669"/>
    <property type="project" value="TreeGrafter"/>
</dbReference>
<dbReference type="GO" id="GO:0008802">
    <property type="term" value="F:betaine-aldehyde dehydrogenase (NAD+) activity"/>
    <property type="evidence" value="ECO:0007669"/>
    <property type="project" value="UniProtKB-EC"/>
</dbReference>
<dbReference type="GO" id="GO:0008812">
    <property type="term" value="F:choline dehydrogenase activity"/>
    <property type="evidence" value="ECO:0007669"/>
    <property type="project" value="UniProtKB-UniRule"/>
</dbReference>
<dbReference type="GO" id="GO:0050660">
    <property type="term" value="F:flavin adenine dinucleotide binding"/>
    <property type="evidence" value="ECO:0007669"/>
    <property type="project" value="InterPro"/>
</dbReference>
<dbReference type="GO" id="GO:0019285">
    <property type="term" value="P:glycine betaine biosynthetic process from choline"/>
    <property type="evidence" value="ECO:0007669"/>
    <property type="project" value="UniProtKB-UniRule"/>
</dbReference>
<dbReference type="Gene3D" id="3.50.50.60">
    <property type="entry name" value="FAD/NAD(P)-binding domain"/>
    <property type="match status" value="1"/>
</dbReference>
<dbReference type="Gene3D" id="3.30.560.10">
    <property type="entry name" value="Glucose Oxidase, domain 3"/>
    <property type="match status" value="1"/>
</dbReference>
<dbReference type="HAMAP" id="MF_00750">
    <property type="entry name" value="Choline_dehydrogen"/>
    <property type="match status" value="1"/>
</dbReference>
<dbReference type="InterPro" id="IPR011533">
    <property type="entry name" value="BetA"/>
</dbReference>
<dbReference type="InterPro" id="IPR036188">
    <property type="entry name" value="FAD/NAD-bd_sf"/>
</dbReference>
<dbReference type="InterPro" id="IPR012132">
    <property type="entry name" value="GMC_OxRdtase"/>
</dbReference>
<dbReference type="InterPro" id="IPR000172">
    <property type="entry name" value="GMC_OxRdtase_N"/>
</dbReference>
<dbReference type="InterPro" id="IPR007867">
    <property type="entry name" value="GMC_OxRtase_C"/>
</dbReference>
<dbReference type="NCBIfam" id="TIGR01810">
    <property type="entry name" value="betA"/>
    <property type="match status" value="1"/>
</dbReference>
<dbReference type="NCBIfam" id="NF002550">
    <property type="entry name" value="PRK02106.1"/>
    <property type="match status" value="1"/>
</dbReference>
<dbReference type="PANTHER" id="PTHR11552:SF147">
    <property type="entry name" value="CHOLINE DEHYDROGENASE, MITOCHONDRIAL"/>
    <property type="match status" value="1"/>
</dbReference>
<dbReference type="PANTHER" id="PTHR11552">
    <property type="entry name" value="GLUCOSE-METHANOL-CHOLINE GMC OXIDOREDUCTASE"/>
    <property type="match status" value="1"/>
</dbReference>
<dbReference type="Pfam" id="PF05199">
    <property type="entry name" value="GMC_oxred_C"/>
    <property type="match status" value="1"/>
</dbReference>
<dbReference type="Pfam" id="PF00732">
    <property type="entry name" value="GMC_oxred_N"/>
    <property type="match status" value="1"/>
</dbReference>
<dbReference type="PIRSF" id="PIRSF000137">
    <property type="entry name" value="Alcohol_oxidase"/>
    <property type="match status" value="1"/>
</dbReference>
<dbReference type="SUPFAM" id="SSF54373">
    <property type="entry name" value="FAD-linked reductases, C-terminal domain"/>
    <property type="match status" value="1"/>
</dbReference>
<dbReference type="SUPFAM" id="SSF51905">
    <property type="entry name" value="FAD/NAD(P)-binding domain"/>
    <property type="match status" value="1"/>
</dbReference>
<dbReference type="PROSITE" id="PS00623">
    <property type="entry name" value="GMC_OXRED_1"/>
    <property type="match status" value="1"/>
</dbReference>
<dbReference type="PROSITE" id="PS00624">
    <property type="entry name" value="GMC_OXRED_2"/>
    <property type="match status" value="1"/>
</dbReference>
<reference key="1">
    <citation type="journal article" date="2010" name="Genome Biol. Evol.">
        <title>Continuing evolution of Burkholderia mallei through genome reduction and large-scale rearrangements.</title>
        <authorList>
            <person name="Losada L."/>
            <person name="Ronning C.M."/>
            <person name="DeShazer D."/>
            <person name="Woods D."/>
            <person name="Fedorova N."/>
            <person name="Kim H.S."/>
            <person name="Shabalina S.A."/>
            <person name="Pearson T.R."/>
            <person name="Brinkac L."/>
            <person name="Tan P."/>
            <person name="Nandi T."/>
            <person name="Crabtree J."/>
            <person name="Badger J."/>
            <person name="Beckstrom-Sternberg S."/>
            <person name="Saqib M."/>
            <person name="Schutzer S.E."/>
            <person name="Keim P."/>
            <person name="Nierman W.C."/>
        </authorList>
    </citation>
    <scope>NUCLEOTIDE SEQUENCE [LARGE SCALE GENOMIC DNA]</scope>
    <source>
        <strain>1710b</strain>
    </source>
</reference>
<evidence type="ECO:0000255" key="1">
    <source>
        <dbReference type="HAMAP-Rule" id="MF_00750"/>
    </source>
</evidence>
<gene>
    <name evidence="1" type="primary">betA</name>
    <name type="ordered locus">BURPS1710b_A0377</name>
</gene>
<name>BETA_BURP1</name>
<feature type="chain" id="PRO_0000258920" description="Oxygen-dependent choline dehydrogenase">
    <location>
        <begin position="1"/>
        <end position="565"/>
    </location>
</feature>
<feature type="active site" description="Proton acceptor" evidence="1">
    <location>
        <position position="474"/>
    </location>
</feature>
<feature type="binding site" evidence="1">
    <location>
        <begin position="7"/>
        <end position="36"/>
    </location>
    <ligand>
        <name>FAD</name>
        <dbReference type="ChEBI" id="CHEBI:57692"/>
    </ligand>
</feature>
<protein>
    <recommendedName>
        <fullName evidence="1">Oxygen-dependent choline dehydrogenase</fullName>
        <shortName evidence="1">CDH</shortName>
        <shortName evidence="1">CHD</shortName>
        <ecNumber evidence="1">1.1.99.1</ecNumber>
    </recommendedName>
    <alternativeName>
        <fullName evidence="1">Betaine aldehyde dehydrogenase</fullName>
        <shortName evidence="1">BADH</shortName>
        <ecNumber evidence="1">1.2.1.8</ecNumber>
    </alternativeName>
</protein>
<organism>
    <name type="scientific">Burkholderia pseudomallei (strain 1710b)</name>
    <dbReference type="NCBI Taxonomy" id="320372"/>
    <lineage>
        <taxon>Bacteria</taxon>
        <taxon>Pseudomonadati</taxon>
        <taxon>Pseudomonadota</taxon>
        <taxon>Betaproteobacteria</taxon>
        <taxon>Burkholderiales</taxon>
        <taxon>Burkholderiaceae</taxon>
        <taxon>Burkholderia</taxon>
        <taxon>pseudomallei group</taxon>
    </lineage>
</organism>
<comment type="function">
    <text evidence="1">Involved in the biosynthesis of the osmoprotectant glycine betaine. Catalyzes the oxidation of choline to betaine aldehyde and betaine aldehyde to glycine betaine at the same rate.</text>
</comment>
<comment type="catalytic activity">
    <reaction evidence="1">
        <text>choline + A = betaine aldehyde + AH2</text>
        <dbReference type="Rhea" id="RHEA:17433"/>
        <dbReference type="ChEBI" id="CHEBI:13193"/>
        <dbReference type="ChEBI" id="CHEBI:15354"/>
        <dbReference type="ChEBI" id="CHEBI:15710"/>
        <dbReference type="ChEBI" id="CHEBI:17499"/>
        <dbReference type="EC" id="1.1.99.1"/>
    </reaction>
</comment>
<comment type="catalytic activity">
    <reaction evidence="1">
        <text>betaine aldehyde + NAD(+) + H2O = glycine betaine + NADH + 2 H(+)</text>
        <dbReference type="Rhea" id="RHEA:15305"/>
        <dbReference type="ChEBI" id="CHEBI:15377"/>
        <dbReference type="ChEBI" id="CHEBI:15378"/>
        <dbReference type="ChEBI" id="CHEBI:15710"/>
        <dbReference type="ChEBI" id="CHEBI:17750"/>
        <dbReference type="ChEBI" id="CHEBI:57540"/>
        <dbReference type="ChEBI" id="CHEBI:57945"/>
        <dbReference type="EC" id="1.2.1.8"/>
    </reaction>
</comment>
<comment type="cofactor">
    <cofactor evidence="1">
        <name>FAD</name>
        <dbReference type="ChEBI" id="CHEBI:57692"/>
    </cofactor>
</comment>
<comment type="pathway">
    <text evidence="1">Amine and polyamine biosynthesis; betaine biosynthesis via choline pathway; betaine aldehyde from choline (cytochrome c reductase route): step 1/1.</text>
</comment>
<comment type="similarity">
    <text evidence="1">Belongs to the GMC oxidoreductase family.</text>
</comment>
<proteinExistence type="inferred from homology"/>
<accession>Q3JLL7</accession>